<feature type="chain" id="PRO_0000087883" description="Type II methyltransferase M.HpaII">
    <location>
        <begin position="1"/>
        <end position="358"/>
    </location>
</feature>
<feature type="domain" description="SAM-dependent MTase C5-type" evidence="1">
    <location>
        <begin position="32"/>
        <end position="356"/>
    </location>
</feature>
<feature type="active site" evidence="1 2">
    <location>
        <position position="103"/>
    </location>
</feature>
<feature type="mutagenesis site" description="Grows at 30 but not 42 degrees Celsius, has reduced methylase activity at 42 degrees Celsius." evidence="3">
    <original>C</original>
    <variation>Y</variation>
    <location>
        <position position="55"/>
    </location>
</feature>
<protein>
    <recommendedName>
        <fullName evidence="4">Type II methyltransferase M.HpaII</fullName>
        <shortName evidence="4">M.HpaII</shortName>
        <ecNumber>2.1.1.37</ecNumber>
    </recommendedName>
    <alternativeName>
        <fullName>Cytosine-specific methyltransferase HpaII</fullName>
    </alternativeName>
    <alternativeName>
        <fullName>Modification methylase HpaII</fullName>
    </alternativeName>
</protein>
<accession>P15446</accession>
<keyword id="KW-0238">DNA-binding</keyword>
<keyword id="KW-0489">Methyltransferase</keyword>
<keyword id="KW-0680">Restriction system</keyword>
<keyword id="KW-0949">S-adenosyl-L-methionine</keyword>
<keyword id="KW-0808">Transferase</keyword>
<reference key="1">
    <citation type="journal article" date="1990" name="Nucleic Acids Res.">
        <title>Cloning and characterization of the HpaII methylase gene.</title>
        <authorList>
            <person name="Card C.O."/>
            <person name="Wilson G.G."/>
            <person name="Weule K."/>
            <person name="Hasapes J."/>
            <person name="Kiss A."/>
            <person name="Roberts R.J."/>
        </authorList>
    </citation>
    <scope>NUCLEOTIDE SEQUENCE [GENOMIC DNA]</scope>
    <scope>FUNCTION</scope>
    <source>
        <strain>ATCC 49669</strain>
    </source>
</reference>
<reference key="2">
    <citation type="journal article" date="1994" name="Gene">
        <title>Organization and sequence of the HpaII restriction-modification system and adjacent genes.</title>
        <authorList>
            <person name="Kulakauskas S."/>
            <person name="Barsomian J.M."/>
            <person name="Lubys A."/>
            <person name="Roberts R.J."/>
            <person name="Wilson G.G."/>
        </authorList>
    </citation>
    <scope>NUCLEOTIDE SEQUENCE [GENOMIC DNA]</scope>
    <scope>MUTAGENESIS OF CYS-55</scope>
</reference>
<reference key="3">
    <citation type="journal article" date="2003" name="Nucleic Acids Res.">
        <title>A nomenclature for restriction enzymes, DNA methyltransferases, homing endonucleases and their genes.</title>
        <authorList>
            <person name="Roberts R.J."/>
            <person name="Belfort M."/>
            <person name="Bestor T."/>
            <person name="Bhagwat A.S."/>
            <person name="Bickle T.A."/>
            <person name="Bitinaite J."/>
            <person name="Blumenthal R.M."/>
            <person name="Degtyarev S.K."/>
            <person name="Dryden D.T."/>
            <person name="Dybvig K."/>
            <person name="Firman K."/>
            <person name="Gromova E.S."/>
            <person name="Gumport R.I."/>
            <person name="Halford S.E."/>
            <person name="Hattman S."/>
            <person name="Heitman J."/>
            <person name="Hornby D.P."/>
            <person name="Janulaitis A."/>
            <person name="Jeltsch A."/>
            <person name="Josephsen J."/>
            <person name="Kiss A."/>
            <person name="Klaenhammer T.R."/>
            <person name="Kobayashi I."/>
            <person name="Kong H."/>
            <person name="Krueger D.H."/>
            <person name="Lacks S."/>
            <person name="Marinus M.G."/>
            <person name="Miyahara M."/>
            <person name="Morgan R.D."/>
            <person name="Murray N.E."/>
            <person name="Nagaraja V."/>
            <person name="Piekarowicz A."/>
            <person name="Pingoud A."/>
            <person name="Raleigh E."/>
            <person name="Rao D.N."/>
            <person name="Reich N."/>
            <person name="Repin V.E."/>
            <person name="Selker E.U."/>
            <person name="Shaw P.C."/>
            <person name="Stein D.C."/>
            <person name="Stoddard B.L."/>
            <person name="Szybalski W."/>
            <person name="Trautner T.A."/>
            <person name="Van Etten J.L."/>
            <person name="Vitor J.M."/>
            <person name="Wilson G.G."/>
            <person name="Xu S.Y."/>
        </authorList>
    </citation>
    <scope>NOMENCLATURE</scope>
</reference>
<name>MTH2_HAEPA</name>
<sequence>MKDVLDDNLLEEPAAQYSLFEPESNPNLREKFTFIDLFAGIGGFRIAMQNLGGKCIFSSEWDEQAQKTYEANFGDLPYGDITLEETKAFIPEKFDILCAGFPCQAFSIAGKRGGFEDTRGTLFFDVAEIIRRHQPKAFFLENVKGLKNHDKGRTLKTILNVLREDLGYFVPEPAIVNAKNFGVPQNRERIYIVGFHKSTGVNSFSYPEPLDKIVTFADIREEKTVPTKYYLSTQYIDTLRKHKERHESKGNGFGYEIIPDDGIANAIVVGGMGRERNLVIDHRITDFTPTTNIKGEVNREGIRKMTPREWARLQGFPDSYVIPVSDASAYKQFGNSVAVPAIQATGKKILEKLGNLYD</sequence>
<comment type="function">
    <text evidence="4 6">A methylase that recognizes the double-stranded sequence 5'-CCGG-3', methylates C-2 on both strands, and protects the DNA from cleavage by the HpaII endonuclease.</text>
</comment>
<comment type="catalytic activity">
    <reaction evidence="2">
        <text>a 2'-deoxycytidine in DNA + S-adenosyl-L-methionine = a 5-methyl-2'-deoxycytidine in DNA + S-adenosyl-L-homocysteine + H(+)</text>
        <dbReference type="Rhea" id="RHEA:13681"/>
        <dbReference type="Rhea" id="RHEA-COMP:11369"/>
        <dbReference type="Rhea" id="RHEA-COMP:11370"/>
        <dbReference type="ChEBI" id="CHEBI:15378"/>
        <dbReference type="ChEBI" id="CHEBI:57856"/>
        <dbReference type="ChEBI" id="CHEBI:59789"/>
        <dbReference type="ChEBI" id="CHEBI:85452"/>
        <dbReference type="ChEBI" id="CHEBI:85454"/>
        <dbReference type="EC" id="2.1.1.37"/>
    </reaction>
</comment>
<comment type="subunit">
    <text>Monomer.</text>
</comment>
<comment type="similarity">
    <text evidence="1">Belongs to the class I-like SAM-binding methyltransferase superfamily. C5-methyltransferase family.</text>
</comment>
<dbReference type="EC" id="2.1.1.37"/>
<dbReference type="EMBL" id="X51322">
    <property type="protein sequence ID" value="CAA35705.1"/>
    <property type="molecule type" value="Genomic_DNA"/>
</dbReference>
<dbReference type="EMBL" id="L17342">
    <property type="protein sequence ID" value="AAA20481.1"/>
    <property type="molecule type" value="Genomic_DNA"/>
</dbReference>
<dbReference type="PIR" id="S15908">
    <property type="entry name" value="S15908"/>
</dbReference>
<dbReference type="RefSeq" id="WP_128787075.1">
    <property type="nucleotide sequence ID" value="NZ_CP035368.2"/>
</dbReference>
<dbReference type="SMR" id="P15446"/>
<dbReference type="REBASE" id="3432">
    <property type="entry name" value="M.HpaII"/>
</dbReference>
<dbReference type="PRO" id="PR:P15446"/>
<dbReference type="GO" id="GO:0003886">
    <property type="term" value="F:DNA (cytosine-5-)-methyltransferase activity"/>
    <property type="evidence" value="ECO:0007669"/>
    <property type="project" value="UniProtKB-EC"/>
</dbReference>
<dbReference type="GO" id="GO:0003677">
    <property type="term" value="F:DNA binding"/>
    <property type="evidence" value="ECO:0007669"/>
    <property type="project" value="UniProtKB-KW"/>
</dbReference>
<dbReference type="GO" id="GO:0009307">
    <property type="term" value="P:DNA restriction-modification system"/>
    <property type="evidence" value="ECO:0007669"/>
    <property type="project" value="UniProtKB-KW"/>
</dbReference>
<dbReference type="GO" id="GO:0032259">
    <property type="term" value="P:methylation"/>
    <property type="evidence" value="ECO:0007669"/>
    <property type="project" value="UniProtKB-KW"/>
</dbReference>
<dbReference type="CDD" id="cd00315">
    <property type="entry name" value="Cyt_C5_DNA_methylase"/>
    <property type="match status" value="1"/>
</dbReference>
<dbReference type="Gene3D" id="3.90.120.30">
    <property type="match status" value="1"/>
</dbReference>
<dbReference type="Gene3D" id="3.40.50.150">
    <property type="entry name" value="Vaccinia Virus protein VP39"/>
    <property type="match status" value="1"/>
</dbReference>
<dbReference type="InterPro" id="IPR050750">
    <property type="entry name" value="C5-MTase"/>
</dbReference>
<dbReference type="InterPro" id="IPR018117">
    <property type="entry name" value="C5_DNA_meth_AS"/>
</dbReference>
<dbReference type="InterPro" id="IPR001525">
    <property type="entry name" value="C5_MeTfrase"/>
</dbReference>
<dbReference type="InterPro" id="IPR029063">
    <property type="entry name" value="SAM-dependent_MTases_sf"/>
</dbReference>
<dbReference type="NCBIfam" id="TIGR00675">
    <property type="entry name" value="dcm"/>
    <property type="match status" value="1"/>
</dbReference>
<dbReference type="PANTHER" id="PTHR46098">
    <property type="entry name" value="TRNA (CYTOSINE(38)-C(5))-METHYLTRANSFERASE"/>
    <property type="match status" value="1"/>
</dbReference>
<dbReference type="PANTHER" id="PTHR46098:SF1">
    <property type="entry name" value="TRNA (CYTOSINE(38)-C(5))-METHYLTRANSFERASE"/>
    <property type="match status" value="1"/>
</dbReference>
<dbReference type="Pfam" id="PF00145">
    <property type="entry name" value="DNA_methylase"/>
    <property type="match status" value="1"/>
</dbReference>
<dbReference type="PRINTS" id="PR00105">
    <property type="entry name" value="C5METTRFRASE"/>
</dbReference>
<dbReference type="SUPFAM" id="SSF53335">
    <property type="entry name" value="S-adenosyl-L-methionine-dependent methyltransferases"/>
    <property type="match status" value="1"/>
</dbReference>
<dbReference type="PROSITE" id="PS00094">
    <property type="entry name" value="C5_MTASE_1"/>
    <property type="match status" value="1"/>
</dbReference>
<dbReference type="PROSITE" id="PS51679">
    <property type="entry name" value="SAM_MT_C5"/>
    <property type="match status" value="1"/>
</dbReference>
<proteinExistence type="evidence at protein level"/>
<gene>
    <name evidence="5" type="primary">hpaIIM</name>
</gene>
<evidence type="ECO:0000255" key="1">
    <source>
        <dbReference type="PROSITE-ProRule" id="PRU01016"/>
    </source>
</evidence>
<evidence type="ECO:0000255" key="2">
    <source>
        <dbReference type="PROSITE-ProRule" id="PRU10018"/>
    </source>
</evidence>
<evidence type="ECO:0000269" key="3">
    <source>
    </source>
</evidence>
<evidence type="ECO:0000303" key="4">
    <source>
    </source>
</evidence>
<evidence type="ECO:0000303" key="5">
    <source>
    </source>
</evidence>
<evidence type="ECO:0000305" key="6">
    <source>
    </source>
</evidence>
<organism>
    <name type="scientific">Haemophilus parainfluenzae</name>
    <dbReference type="NCBI Taxonomy" id="729"/>
    <lineage>
        <taxon>Bacteria</taxon>
        <taxon>Pseudomonadati</taxon>
        <taxon>Pseudomonadota</taxon>
        <taxon>Gammaproteobacteria</taxon>
        <taxon>Pasteurellales</taxon>
        <taxon>Pasteurellaceae</taxon>
        <taxon>Haemophilus</taxon>
    </lineage>
</organism>